<comment type="function">
    <text evidence="1">Catalyzes the attachment of O-phosphoserine (Sep) to tRNA(Cys).</text>
</comment>
<comment type="catalytic activity">
    <reaction evidence="1">
        <text>tRNA(Cys) + O-phospho-L-serine + ATP = O-phospho-L-seryl-tRNA(Cys) + AMP + diphosphate</text>
        <dbReference type="Rhea" id="RHEA:25678"/>
        <dbReference type="Rhea" id="RHEA-COMP:9661"/>
        <dbReference type="Rhea" id="RHEA-COMP:9719"/>
        <dbReference type="ChEBI" id="CHEBI:30616"/>
        <dbReference type="ChEBI" id="CHEBI:33019"/>
        <dbReference type="ChEBI" id="CHEBI:57524"/>
        <dbReference type="ChEBI" id="CHEBI:78442"/>
        <dbReference type="ChEBI" id="CHEBI:78551"/>
        <dbReference type="ChEBI" id="CHEBI:456215"/>
        <dbReference type="EC" id="6.1.1.27"/>
    </reaction>
</comment>
<comment type="subunit">
    <text evidence="1">Homotetramer. Interacts with SepCysS.</text>
</comment>
<comment type="similarity">
    <text evidence="1">Belongs to the class-II aminoacyl-tRNA synthetase family. O-phosphoseryl-tRNA(Cys) synthetase subfamily.</text>
</comment>
<reference key="1">
    <citation type="journal article" date="2015" name="Microbiology">
        <title>Genome of Methanoregula boonei 6A8 reveals adaptations to oligotrophic peatland environments.</title>
        <authorList>
            <person name="Braeuer S."/>
            <person name="Cadillo-Quiroz H."/>
            <person name="Kyrpides N."/>
            <person name="Woyke T."/>
            <person name="Goodwin L."/>
            <person name="Detter C."/>
            <person name="Podell S."/>
            <person name="Yavitt J.B."/>
            <person name="Zinder S.H."/>
        </authorList>
    </citation>
    <scope>NUCLEOTIDE SEQUENCE [LARGE SCALE GENOMIC DNA]</scope>
    <source>
        <strain>DSM 21154 / JCM 14090 / 6A8</strain>
    </source>
</reference>
<sequence>MRFNPQDWKEKSHTNFEGAWHDGPSVITPPGEDKKYPRLRYTRAQPHPIFATINRLREIYLSMGFDECENPVIVEESDIYRQFGPEAMAVLDRVFYIGGLPRPNVGISRKQLDEINDILQSHRSPLVHGHEIPAGDSGNKEPFRPMSRETEEQLRETLHAYKKSEIDGDELTHELAKVLGVDDGIVVHILDSVFPEFRSLVPESSRSTLRSHMTSGWFMTLGSLWERTPLPIKLFSVDRCFRREQAEGPTRLMTYHSASCVVAREDVTIEDGKAVSEALLSAFGYEDFRFQPDDKRSKYYMPDSQTEVYAKHPVHGWVEVATFGMYSPSALGEYGIGVPVMNLGLGVERLAMIAYNANDVRQLSYPQFFPRLAGDREIACAVHLREEPVTVEGKALALAIARVAAAHATEQGPCSFTVWEGTLYGRNVNVIIEETEANAKLCGPACANEIFVHEGNILGVPDNEKWKDVRIKGIPTGISYLSAVSALAAANIEHAARCGTGTQVQVKMAKHPGDINLKIEEYAMRTITDTKKKVDVRGPVFLAVRSEIAE</sequence>
<dbReference type="EC" id="6.1.1.27" evidence="1"/>
<dbReference type="EMBL" id="CP000780">
    <property type="protein sequence ID" value="ABS54795.1"/>
    <property type="molecule type" value="Genomic_DNA"/>
</dbReference>
<dbReference type="RefSeq" id="WP_011991283.1">
    <property type="nucleotide sequence ID" value="NC_009712.1"/>
</dbReference>
<dbReference type="SMR" id="A7I4Y4"/>
<dbReference type="STRING" id="456442.Mboo_0273"/>
<dbReference type="GeneID" id="5412226"/>
<dbReference type="KEGG" id="mbn:Mboo_0273"/>
<dbReference type="eggNOG" id="arCOG00411">
    <property type="taxonomic scope" value="Archaea"/>
</dbReference>
<dbReference type="HOGENOM" id="CLU_506822_0_0_2"/>
<dbReference type="OrthoDB" id="145125at2157"/>
<dbReference type="Proteomes" id="UP000002408">
    <property type="component" value="Chromosome"/>
</dbReference>
<dbReference type="GO" id="GO:0005524">
    <property type="term" value="F:ATP binding"/>
    <property type="evidence" value="ECO:0007669"/>
    <property type="project" value="UniProtKB-UniRule"/>
</dbReference>
<dbReference type="GO" id="GO:0043816">
    <property type="term" value="F:phosphoserine-tRNA(Cys) ligase activity"/>
    <property type="evidence" value="ECO:0007669"/>
    <property type="project" value="UniProtKB-EC"/>
</dbReference>
<dbReference type="GO" id="GO:0000049">
    <property type="term" value="F:tRNA binding"/>
    <property type="evidence" value="ECO:0007669"/>
    <property type="project" value="InterPro"/>
</dbReference>
<dbReference type="GO" id="GO:0006412">
    <property type="term" value="P:translation"/>
    <property type="evidence" value="ECO:0007669"/>
    <property type="project" value="UniProtKB-KW"/>
</dbReference>
<dbReference type="GO" id="GO:0043039">
    <property type="term" value="P:tRNA aminoacylation"/>
    <property type="evidence" value="ECO:0007669"/>
    <property type="project" value="UniProtKB-UniRule"/>
</dbReference>
<dbReference type="Gene3D" id="6.20.250.20">
    <property type="match status" value="1"/>
</dbReference>
<dbReference type="Gene3D" id="3.30.930.10">
    <property type="entry name" value="Bira Bifunctional Protein, Domain 2"/>
    <property type="match status" value="1"/>
</dbReference>
<dbReference type="HAMAP" id="MF_01674">
    <property type="entry name" value="Sep_tRNA_synth"/>
    <property type="match status" value="1"/>
</dbReference>
<dbReference type="InterPro" id="IPR006195">
    <property type="entry name" value="aa-tRNA-synth_II"/>
</dbReference>
<dbReference type="InterPro" id="IPR045864">
    <property type="entry name" value="aa-tRNA-synth_II/BPL/LPL"/>
</dbReference>
<dbReference type="InterPro" id="IPR005246">
    <property type="entry name" value="O-Pseryl-tRNA(Cys)_ligase"/>
</dbReference>
<dbReference type="InterPro" id="IPR002319">
    <property type="entry name" value="Phenylalanyl-tRNA_Synthase"/>
</dbReference>
<dbReference type="InterPro" id="IPR041590">
    <property type="entry name" value="SepRS_C"/>
</dbReference>
<dbReference type="NCBIfam" id="TIGR00470">
    <property type="entry name" value="sepS"/>
    <property type="match status" value="1"/>
</dbReference>
<dbReference type="Pfam" id="PF18006">
    <property type="entry name" value="SepRS_C"/>
    <property type="match status" value="1"/>
</dbReference>
<dbReference type="Pfam" id="PF01409">
    <property type="entry name" value="tRNA-synt_2d"/>
    <property type="match status" value="1"/>
</dbReference>
<dbReference type="SUPFAM" id="SSF55681">
    <property type="entry name" value="Class II aaRS and biotin synthetases"/>
    <property type="match status" value="1"/>
</dbReference>
<dbReference type="PROSITE" id="PS50862">
    <property type="entry name" value="AA_TRNA_LIGASE_II"/>
    <property type="match status" value="1"/>
</dbReference>
<gene>
    <name evidence="1" type="primary">sepS</name>
    <name type="ordered locus">Mboo_0273</name>
</gene>
<proteinExistence type="inferred from homology"/>
<organism>
    <name type="scientific">Methanoregula boonei (strain DSM 21154 / JCM 14090 / 6A8)</name>
    <dbReference type="NCBI Taxonomy" id="456442"/>
    <lineage>
        <taxon>Archaea</taxon>
        <taxon>Methanobacteriati</taxon>
        <taxon>Methanobacteriota</taxon>
        <taxon>Stenosarchaea group</taxon>
        <taxon>Methanomicrobia</taxon>
        <taxon>Methanomicrobiales</taxon>
        <taxon>Methanoregulaceae</taxon>
        <taxon>Methanoregula</taxon>
    </lineage>
</organism>
<keyword id="KW-0030">Aminoacyl-tRNA synthetase</keyword>
<keyword id="KW-0067">ATP-binding</keyword>
<keyword id="KW-0436">Ligase</keyword>
<keyword id="KW-0547">Nucleotide-binding</keyword>
<keyword id="KW-0648">Protein biosynthesis</keyword>
<keyword id="KW-1185">Reference proteome</keyword>
<protein>
    <recommendedName>
        <fullName evidence="1">O-phosphoserine--tRNA(Cys) ligase</fullName>
        <shortName evidence="1">O-phosphoserine--tRNA ligase</shortName>
        <ecNumber evidence="1">6.1.1.27</ecNumber>
    </recommendedName>
    <alternativeName>
        <fullName evidence="1">Non-canonical O-phosphoseryl-tRNA(Cys) synthetase</fullName>
    </alternativeName>
    <alternativeName>
        <fullName evidence="1">O-phosphoseryl-tRNA(Cys) synthetase</fullName>
        <shortName evidence="1">SepRS</shortName>
    </alternativeName>
</protein>
<name>SEPS_METB6</name>
<feature type="chain" id="PRO_0000363758" description="O-phosphoserine--tRNA(Cys) ligase">
    <location>
        <begin position="1"/>
        <end position="550"/>
    </location>
</feature>
<feature type="region of interest" description="Disordered" evidence="2">
    <location>
        <begin position="1"/>
        <end position="32"/>
    </location>
</feature>
<feature type="binding site" evidence="1">
    <location>
        <begin position="212"/>
        <end position="214"/>
    </location>
    <ligand>
        <name>substrate</name>
    </ligand>
</feature>
<feature type="binding site" evidence="1">
    <location>
        <begin position="257"/>
        <end position="259"/>
    </location>
    <ligand>
        <name>substrate</name>
    </ligand>
</feature>
<feature type="binding site" evidence="1">
    <location>
        <begin position="299"/>
        <end position="300"/>
    </location>
    <ligand>
        <name>substrate</name>
    </ligand>
</feature>
<feature type="binding site" evidence="1">
    <location>
        <position position="342"/>
    </location>
    <ligand>
        <name>substrate</name>
    </ligand>
</feature>
<accession>A7I4Y4</accession>
<evidence type="ECO:0000255" key="1">
    <source>
        <dbReference type="HAMAP-Rule" id="MF_01674"/>
    </source>
</evidence>
<evidence type="ECO:0000256" key="2">
    <source>
        <dbReference type="SAM" id="MobiDB-lite"/>
    </source>
</evidence>